<sequence>MGIDLHLIANFAALALITLAGPAVIFILFYRRGAL</sequence>
<accession>B1X5P3</accession>
<feature type="chain" id="PRO_0000365274" description="Photosystem II reaction center protein Psb30">
    <location>
        <begin position="1"/>
        <end position="35"/>
    </location>
</feature>
<feature type="transmembrane region" description="Helical" evidence="1">
    <location>
        <begin position="7"/>
        <end position="27"/>
    </location>
</feature>
<comment type="function">
    <text evidence="1">A core subunit of photosystem II (PSII), probably helps stabilize the reaction center.</text>
</comment>
<comment type="subunit">
    <text evidence="1">PSII is composed of 1 copy each of membrane proteins PsbA, PsbB, PsbC, PsbD, PsbE, PsbF, PsbH, PsbI, PsbJ, PsbK, PsbL, PsbM, PsbT, PsbX, PsbY, PsbZ, Psb30/Ycf12, peripheral proteins of the oxygen-evolving complex and a large number of cofactors. It forms dimeric complexes.</text>
</comment>
<comment type="subcellular location">
    <subcellularLocation>
        <location evidence="1">Plastid</location>
        <location evidence="1">Organellar chromatophore thylakoid membrane</location>
        <topology evidence="1">Single-pass membrane protein</topology>
    </subcellularLocation>
</comment>
<comment type="similarity">
    <text evidence="1">Belongs to the Psb30/Ycf12 family.</text>
</comment>
<evidence type="ECO:0000255" key="1">
    <source>
        <dbReference type="HAMAP-Rule" id="MF_01329"/>
    </source>
</evidence>
<organism>
    <name type="scientific">Paulinella chromatophora</name>
    <dbReference type="NCBI Taxonomy" id="39717"/>
    <lineage>
        <taxon>Eukaryota</taxon>
        <taxon>Sar</taxon>
        <taxon>Rhizaria</taxon>
        <taxon>Cercozoa</taxon>
        <taxon>Imbricatea</taxon>
        <taxon>Silicofilosea</taxon>
        <taxon>Euglyphida</taxon>
        <taxon>Paulinellidae</taxon>
        <taxon>Paulinella</taxon>
    </lineage>
</organism>
<protein>
    <recommendedName>
        <fullName evidence="1">Photosystem II reaction center protein Psb30</fullName>
    </recommendedName>
    <alternativeName>
        <fullName evidence="1">Photosystem II reaction center protein Ycf12</fullName>
    </alternativeName>
</protein>
<gene>
    <name evidence="1" type="primary">psb30</name>
    <name evidence="1" type="synonym">ycf12</name>
    <name type="ordered locus">PCC_0852</name>
</gene>
<name>PSB30_PAUCH</name>
<geneLocation type="organellar chromatophore"/>
<dbReference type="EMBL" id="CP000815">
    <property type="protein sequence ID" value="ACB43262.1"/>
    <property type="molecule type" value="Genomic_DNA"/>
</dbReference>
<dbReference type="RefSeq" id="YP_002049472.1">
    <property type="nucleotide sequence ID" value="NC_011087.1"/>
</dbReference>
<dbReference type="SMR" id="B1X5P3"/>
<dbReference type="GeneID" id="6481559"/>
<dbReference type="GO" id="GO:0070118">
    <property type="term" value="C:organellar chromatophore thylakoid membrane"/>
    <property type="evidence" value="ECO:0007669"/>
    <property type="project" value="UniProtKB-SubCell"/>
</dbReference>
<dbReference type="GO" id="GO:0009523">
    <property type="term" value="C:photosystem II"/>
    <property type="evidence" value="ECO:0007669"/>
    <property type="project" value="UniProtKB-KW"/>
</dbReference>
<dbReference type="GO" id="GO:0009536">
    <property type="term" value="C:plastid"/>
    <property type="evidence" value="ECO:0007669"/>
    <property type="project" value="UniProtKB-KW"/>
</dbReference>
<dbReference type="GO" id="GO:0015979">
    <property type="term" value="P:photosynthesis"/>
    <property type="evidence" value="ECO:0007669"/>
    <property type="project" value="UniProtKB-KW"/>
</dbReference>
<dbReference type="HAMAP" id="MF_01329">
    <property type="entry name" value="PSII_Psb30_Ycf12"/>
    <property type="match status" value="1"/>
</dbReference>
<dbReference type="InterPro" id="IPR010284">
    <property type="entry name" value="PSII_Ycf12_core-subunit"/>
</dbReference>
<dbReference type="NCBIfam" id="NF010239">
    <property type="entry name" value="PRK13686.1"/>
    <property type="match status" value="1"/>
</dbReference>
<dbReference type="Pfam" id="PF05969">
    <property type="entry name" value="PSII_Ycf12"/>
    <property type="match status" value="1"/>
</dbReference>
<keyword id="KW-0472">Membrane</keyword>
<keyword id="KW-0994">Organellar chromatophore</keyword>
<keyword id="KW-0602">Photosynthesis</keyword>
<keyword id="KW-0604">Photosystem II</keyword>
<keyword id="KW-0934">Plastid</keyword>
<keyword id="KW-0793">Thylakoid</keyword>
<keyword id="KW-0812">Transmembrane</keyword>
<keyword id="KW-1133">Transmembrane helix</keyword>
<proteinExistence type="inferred from homology"/>
<reference key="1">
    <citation type="journal article" date="2008" name="Curr. Biol.">
        <title>Chromatophore genome sequence of Paulinella sheds light on acquisition of photosynthesis by eukaryotes.</title>
        <authorList>
            <person name="Nowack E.C.M."/>
            <person name="Melkonian M."/>
            <person name="Gloeckner G."/>
        </authorList>
    </citation>
    <scope>NUCLEOTIDE SEQUENCE [LARGE SCALE GENOMIC DNA]</scope>
</reference>